<evidence type="ECO:0000255" key="1">
    <source>
        <dbReference type="HAMAP-Rule" id="MF_00530"/>
    </source>
</evidence>
<keyword id="KW-0066">ATP synthesis</keyword>
<keyword id="KW-0997">Cell inner membrane</keyword>
<keyword id="KW-1003">Cell membrane</keyword>
<keyword id="KW-0139">CF(1)</keyword>
<keyword id="KW-0375">Hydrogen ion transport</keyword>
<keyword id="KW-0406">Ion transport</keyword>
<keyword id="KW-0472">Membrane</keyword>
<keyword id="KW-1185">Reference proteome</keyword>
<keyword id="KW-0813">Transport</keyword>
<reference key="1">
    <citation type="submission" date="2006-08" db="EMBL/GenBank/DDBJ databases">
        <title>Complete sequence of Shewanella frigidimarina NCIMB 400.</title>
        <authorList>
            <consortium name="US DOE Joint Genome Institute"/>
            <person name="Copeland A."/>
            <person name="Lucas S."/>
            <person name="Lapidus A."/>
            <person name="Barry K."/>
            <person name="Detter J.C."/>
            <person name="Glavina del Rio T."/>
            <person name="Hammon N."/>
            <person name="Israni S."/>
            <person name="Dalin E."/>
            <person name="Tice H."/>
            <person name="Pitluck S."/>
            <person name="Fredrickson J.K."/>
            <person name="Kolker E."/>
            <person name="McCuel L.A."/>
            <person name="DiChristina T."/>
            <person name="Nealson K.H."/>
            <person name="Newman D."/>
            <person name="Tiedje J.M."/>
            <person name="Zhou J."/>
            <person name="Romine M.F."/>
            <person name="Culley D.E."/>
            <person name="Serres M."/>
            <person name="Chertkov O."/>
            <person name="Brettin T."/>
            <person name="Bruce D."/>
            <person name="Han C."/>
            <person name="Tapia R."/>
            <person name="Gilna P."/>
            <person name="Schmutz J."/>
            <person name="Larimer F."/>
            <person name="Land M."/>
            <person name="Hauser L."/>
            <person name="Kyrpides N."/>
            <person name="Mikhailova N."/>
            <person name="Richardson P."/>
        </authorList>
    </citation>
    <scope>NUCLEOTIDE SEQUENCE [LARGE SCALE GENOMIC DNA]</scope>
    <source>
        <strain>NCIMB 400</strain>
    </source>
</reference>
<protein>
    <recommendedName>
        <fullName evidence="1">ATP synthase epsilon chain</fullName>
    </recommendedName>
    <alternativeName>
        <fullName evidence="1">ATP synthase F1 sector epsilon subunit</fullName>
    </alternativeName>
    <alternativeName>
        <fullName evidence="1">F-ATPase epsilon subunit</fullName>
    </alternativeName>
</protein>
<dbReference type="EMBL" id="CP000447">
    <property type="protein sequence ID" value="ABI73869.1"/>
    <property type="molecule type" value="Genomic_DNA"/>
</dbReference>
<dbReference type="RefSeq" id="WP_011639449.1">
    <property type="nucleotide sequence ID" value="NC_008345.1"/>
</dbReference>
<dbReference type="SMR" id="Q07VU5"/>
<dbReference type="STRING" id="318167.Sfri_4044"/>
<dbReference type="KEGG" id="sfr:Sfri_4044"/>
<dbReference type="eggNOG" id="COG0355">
    <property type="taxonomic scope" value="Bacteria"/>
</dbReference>
<dbReference type="HOGENOM" id="CLU_084338_2_0_6"/>
<dbReference type="OrthoDB" id="9791445at2"/>
<dbReference type="Proteomes" id="UP000000684">
    <property type="component" value="Chromosome"/>
</dbReference>
<dbReference type="GO" id="GO:0005886">
    <property type="term" value="C:plasma membrane"/>
    <property type="evidence" value="ECO:0007669"/>
    <property type="project" value="UniProtKB-SubCell"/>
</dbReference>
<dbReference type="GO" id="GO:0045259">
    <property type="term" value="C:proton-transporting ATP synthase complex"/>
    <property type="evidence" value="ECO:0007669"/>
    <property type="project" value="UniProtKB-KW"/>
</dbReference>
<dbReference type="GO" id="GO:0005524">
    <property type="term" value="F:ATP binding"/>
    <property type="evidence" value="ECO:0007669"/>
    <property type="project" value="UniProtKB-UniRule"/>
</dbReference>
<dbReference type="GO" id="GO:0046933">
    <property type="term" value="F:proton-transporting ATP synthase activity, rotational mechanism"/>
    <property type="evidence" value="ECO:0007669"/>
    <property type="project" value="UniProtKB-UniRule"/>
</dbReference>
<dbReference type="CDD" id="cd12152">
    <property type="entry name" value="F1-ATPase_delta"/>
    <property type="match status" value="1"/>
</dbReference>
<dbReference type="FunFam" id="1.20.5.440:FF:000001">
    <property type="entry name" value="ATP synthase epsilon chain"/>
    <property type="match status" value="1"/>
</dbReference>
<dbReference type="FunFam" id="2.60.15.10:FF:000001">
    <property type="entry name" value="ATP synthase epsilon chain"/>
    <property type="match status" value="1"/>
</dbReference>
<dbReference type="Gene3D" id="1.20.5.440">
    <property type="entry name" value="ATP synthase delta/epsilon subunit, C-terminal domain"/>
    <property type="match status" value="1"/>
</dbReference>
<dbReference type="Gene3D" id="2.60.15.10">
    <property type="entry name" value="F0F1 ATP synthase delta/epsilon subunit, N-terminal"/>
    <property type="match status" value="1"/>
</dbReference>
<dbReference type="HAMAP" id="MF_00530">
    <property type="entry name" value="ATP_synth_epsil_bac"/>
    <property type="match status" value="1"/>
</dbReference>
<dbReference type="InterPro" id="IPR036794">
    <property type="entry name" value="ATP_F1_dsu/esu_C_sf"/>
</dbReference>
<dbReference type="InterPro" id="IPR001469">
    <property type="entry name" value="ATP_synth_F1_dsu/esu"/>
</dbReference>
<dbReference type="InterPro" id="IPR020546">
    <property type="entry name" value="ATP_synth_F1_dsu/esu_N"/>
</dbReference>
<dbReference type="InterPro" id="IPR020547">
    <property type="entry name" value="ATP_synth_F1_esu_C"/>
</dbReference>
<dbReference type="InterPro" id="IPR036771">
    <property type="entry name" value="ATPsynth_dsu/esu_N"/>
</dbReference>
<dbReference type="NCBIfam" id="TIGR01216">
    <property type="entry name" value="ATP_synt_epsi"/>
    <property type="match status" value="1"/>
</dbReference>
<dbReference type="NCBIfam" id="NF001847">
    <property type="entry name" value="PRK00571.1-4"/>
    <property type="match status" value="1"/>
</dbReference>
<dbReference type="PANTHER" id="PTHR13822">
    <property type="entry name" value="ATP SYNTHASE DELTA/EPSILON CHAIN"/>
    <property type="match status" value="1"/>
</dbReference>
<dbReference type="PANTHER" id="PTHR13822:SF10">
    <property type="entry name" value="ATP SYNTHASE EPSILON CHAIN, CHLOROPLASTIC"/>
    <property type="match status" value="1"/>
</dbReference>
<dbReference type="Pfam" id="PF00401">
    <property type="entry name" value="ATP-synt_DE"/>
    <property type="match status" value="1"/>
</dbReference>
<dbReference type="Pfam" id="PF02823">
    <property type="entry name" value="ATP-synt_DE_N"/>
    <property type="match status" value="1"/>
</dbReference>
<dbReference type="SUPFAM" id="SSF46604">
    <property type="entry name" value="Epsilon subunit of F1F0-ATP synthase C-terminal domain"/>
    <property type="match status" value="1"/>
</dbReference>
<dbReference type="SUPFAM" id="SSF51344">
    <property type="entry name" value="Epsilon subunit of F1F0-ATP synthase N-terminal domain"/>
    <property type="match status" value="1"/>
</dbReference>
<gene>
    <name evidence="1" type="primary">atpC</name>
    <name type="ordered locus">Sfri_4044</name>
</gene>
<proteinExistence type="inferred from homology"/>
<name>ATPE_SHEFN</name>
<organism>
    <name type="scientific">Shewanella frigidimarina (strain NCIMB 400)</name>
    <dbReference type="NCBI Taxonomy" id="318167"/>
    <lineage>
        <taxon>Bacteria</taxon>
        <taxon>Pseudomonadati</taxon>
        <taxon>Pseudomonadota</taxon>
        <taxon>Gammaproteobacteria</taxon>
        <taxon>Alteromonadales</taxon>
        <taxon>Shewanellaceae</taxon>
        <taxon>Shewanella</taxon>
    </lineage>
</organism>
<comment type="function">
    <text evidence="1">Produces ATP from ADP in the presence of a proton gradient across the membrane.</text>
</comment>
<comment type="subunit">
    <text>F-type ATPases have 2 components, CF(1) - the catalytic core - and CF(0) - the membrane proton channel. CF(1) has five subunits: alpha(3), beta(3), gamma(1), delta(1), epsilon(1). CF(0) has three main subunits: a, b and c.</text>
</comment>
<comment type="subcellular location">
    <subcellularLocation>
        <location evidence="1">Cell inner membrane</location>
        <topology evidence="1">Peripheral membrane protein</topology>
    </subcellularLocation>
</comment>
<comment type="similarity">
    <text evidence="1">Belongs to the ATPase epsilon chain family.</text>
</comment>
<sequence>MAAKTVQLDIVSAENSIFHGQVSFLEVNGAEGELGIMPNHVALLTKIKPGMARFIKQDGSEEVLYLSGGLLEVQPTAISVLADVALRADDIDEKAALEAKERAEQAIANAGTDFNYEAATIELAKSLAQLRVVECIKKNITR</sequence>
<accession>Q07VU5</accession>
<feature type="chain" id="PRO_0000265889" description="ATP synthase epsilon chain">
    <location>
        <begin position="1"/>
        <end position="142"/>
    </location>
</feature>